<proteinExistence type="evidence at protein level"/>
<name>MMF1_YEAST</name>
<gene>
    <name type="primary">MMF1</name>
    <name type="synonym">IBM1</name>
    <name type="ordered locus">YIL051C</name>
</gene>
<comment type="function">
    <text>Plays a role in the maintenance of mitochondrial DNA.</text>
</comment>
<comment type="subcellular location">
    <subcellularLocation>
        <location evidence="1 2">Mitochondrion matrix</location>
    </subcellularLocation>
</comment>
<comment type="miscellaneous">
    <text evidence="3">Present with 168000 molecules/cell in log phase SD medium.</text>
</comment>
<comment type="similarity">
    <text evidence="5">Belongs to the RutC family.</text>
</comment>
<keyword id="KW-0002">3D-structure</keyword>
<keyword id="KW-0903">Direct protein sequencing</keyword>
<keyword id="KW-0496">Mitochondrion</keyword>
<keyword id="KW-1185">Reference proteome</keyword>
<keyword id="KW-0809">Transit peptide</keyword>
<evidence type="ECO:0000269" key="1">
    <source>
    </source>
</evidence>
<evidence type="ECO:0000269" key="2">
    <source>
    </source>
</evidence>
<evidence type="ECO:0000269" key="3">
    <source>
    </source>
</evidence>
<evidence type="ECO:0000269" key="4">
    <source ref="5"/>
</evidence>
<evidence type="ECO:0000305" key="5"/>
<evidence type="ECO:0007829" key="6">
    <source>
        <dbReference type="PDB" id="3QUW"/>
    </source>
</evidence>
<feature type="transit peptide" description="Mitochondrion" evidence="1 4">
    <location>
        <begin position="1"/>
        <end position="17"/>
    </location>
</feature>
<feature type="chain" id="PRO_0000036209" description="Protein MMF1, mitochondrial">
    <location>
        <begin position="18"/>
        <end position="145"/>
    </location>
</feature>
<feature type="strand" evidence="6">
    <location>
        <begin position="21"/>
        <end position="24"/>
    </location>
</feature>
<feature type="strand" evidence="6">
    <location>
        <begin position="38"/>
        <end position="42"/>
    </location>
</feature>
<feature type="strand" evidence="6">
    <location>
        <begin position="45"/>
        <end position="51"/>
    </location>
</feature>
<feature type="helix" evidence="6">
    <location>
        <begin position="65"/>
        <end position="82"/>
    </location>
</feature>
<feature type="helix" evidence="6">
    <location>
        <begin position="87"/>
        <end position="89"/>
    </location>
</feature>
<feature type="strand" evidence="6">
    <location>
        <begin position="90"/>
        <end position="98"/>
    </location>
</feature>
<feature type="helix" evidence="6">
    <location>
        <begin position="100"/>
        <end position="102"/>
    </location>
</feature>
<feature type="helix" evidence="6">
    <location>
        <begin position="103"/>
        <end position="113"/>
    </location>
</feature>
<feature type="strand" evidence="6">
    <location>
        <begin position="114"/>
        <end position="116"/>
    </location>
</feature>
<feature type="strand" evidence="6">
    <location>
        <begin position="120"/>
        <end position="125"/>
    </location>
</feature>
<feature type="helix" evidence="6">
    <location>
        <begin position="130"/>
        <end position="132"/>
    </location>
</feature>
<feature type="strand" evidence="6">
    <location>
        <begin position="134"/>
        <end position="142"/>
    </location>
</feature>
<reference key="1">
    <citation type="journal article" date="2001" name="Genes Cells">
        <title>A member of the YER057c/yjgf/Uk114 family links isoleucine biosynthesis and intact mitochondria maintenance in Saccharomyces cerevisiae.</title>
        <authorList>
            <person name="Kim J.-M."/>
            <person name="Yoshikawa H."/>
            <person name="Shirahige K."/>
        </authorList>
    </citation>
    <scope>NUCLEOTIDE SEQUENCE [GENOMIC DNA]</scope>
    <scope>SUBCELLULAR LOCATION</scope>
    <scope>CHARACTERIZATION</scope>
</reference>
<reference key="2">
    <citation type="journal article" date="1997" name="Nature">
        <title>The nucleotide sequence of Saccharomyces cerevisiae chromosome IX.</title>
        <authorList>
            <person name="Churcher C.M."/>
            <person name="Bowman S."/>
            <person name="Badcock K."/>
            <person name="Bankier A.T."/>
            <person name="Brown D."/>
            <person name="Chillingworth T."/>
            <person name="Connor R."/>
            <person name="Devlin K."/>
            <person name="Gentles S."/>
            <person name="Hamlin N."/>
            <person name="Harris D.E."/>
            <person name="Horsnell T."/>
            <person name="Hunt S."/>
            <person name="Jagels K."/>
            <person name="Jones M."/>
            <person name="Lye G."/>
            <person name="Moule S."/>
            <person name="Odell C."/>
            <person name="Pearson D."/>
            <person name="Rajandream M.A."/>
            <person name="Rice P."/>
            <person name="Rowley N."/>
            <person name="Skelton J."/>
            <person name="Smith V."/>
            <person name="Walsh S.V."/>
            <person name="Whitehead S."/>
            <person name="Barrell B.G."/>
        </authorList>
    </citation>
    <scope>NUCLEOTIDE SEQUENCE [LARGE SCALE GENOMIC DNA]</scope>
    <source>
        <strain>ATCC 204508 / S288c</strain>
    </source>
</reference>
<reference key="3">
    <citation type="journal article" date="2014" name="G3 (Bethesda)">
        <title>The reference genome sequence of Saccharomyces cerevisiae: Then and now.</title>
        <authorList>
            <person name="Engel S.R."/>
            <person name="Dietrich F.S."/>
            <person name="Fisk D.G."/>
            <person name="Binkley G."/>
            <person name="Balakrishnan R."/>
            <person name="Costanzo M.C."/>
            <person name="Dwight S.S."/>
            <person name="Hitz B.C."/>
            <person name="Karra K."/>
            <person name="Nash R.S."/>
            <person name="Weng S."/>
            <person name="Wong E.D."/>
            <person name="Lloyd P."/>
            <person name="Skrzypek M.S."/>
            <person name="Miyasato S.R."/>
            <person name="Simison M."/>
            <person name="Cherry J.M."/>
        </authorList>
    </citation>
    <scope>GENOME REANNOTATION</scope>
    <source>
        <strain>ATCC 204508 / S288c</strain>
    </source>
</reference>
<reference key="4">
    <citation type="journal article" date="2007" name="Genome Res.">
        <title>Approaching a complete repository of sequence-verified protein-encoding clones for Saccharomyces cerevisiae.</title>
        <authorList>
            <person name="Hu Y."/>
            <person name="Rolfs A."/>
            <person name="Bhullar B."/>
            <person name="Murthy T.V.S."/>
            <person name="Zhu C."/>
            <person name="Berger M.F."/>
            <person name="Camargo A.A."/>
            <person name="Kelley F."/>
            <person name="McCarron S."/>
            <person name="Jepson D."/>
            <person name="Richardson A."/>
            <person name="Raphael J."/>
            <person name="Moreira D."/>
            <person name="Taycher E."/>
            <person name="Zuo D."/>
            <person name="Mohr S."/>
            <person name="Kane M.F."/>
            <person name="Williamson J."/>
            <person name="Simpson A.J.G."/>
            <person name="Bulyk M.L."/>
            <person name="Harlow E."/>
            <person name="Marsischky G."/>
            <person name="Kolodner R.D."/>
            <person name="LaBaer J."/>
        </authorList>
    </citation>
    <scope>NUCLEOTIDE SEQUENCE [GENOMIC DNA]</scope>
    <source>
        <strain>ATCC 204508 / S288c</strain>
    </source>
</reference>
<reference key="5">
    <citation type="submission" date="1995-06" db="UniProtKB">
        <authorList>
            <person name="Frutiger S."/>
            <person name="Paquet N."/>
            <person name="Pasquali C."/>
            <person name="Ravier F."/>
            <person name="Sanchez J.-C."/>
            <person name="Hughes G.J."/>
            <person name="Hochstrasser D.F."/>
        </authorList>
    </citation>
    <scope>PROTEIN SEQUENCE OF 18-28</scope>
    <source>
        <strain>ATCC 26786 / X2180-1A</strain>
    </source>
</reference>
<reference key="6">
    <citation type="journal article" date="2000" name="Mol. Cell. Biol.">
        <title>Mmf1p, a novel yeast mitochondrial protein conserved throughout evolution and involved in maintenance of the mitochondrial genome.</title>
        <authorList>
            <person name="Oxelmark E."/>
            <person name="Marchini A."/>
            <person name="Malanchi I."/>
            <person name="Magherini F."/>
            <person name="Jaquet L."/>
            <person name="Hajibagheri M.A."/>
            <person name="Blight K.J."/>
            <person name="Jauniaux J.-C."/>
            <person name="Tommasino M."/>
        </authorList>
    </citation>
    <scope>PROTEIN SEQUENCE OF N-TERMINUS</scope>
    <scope>SUBCELLULAR LOCATION</scope>
    <scope>CHARACTERIZATION</scope>
</reference>
<reference key="7">
    <citation type="journal article" date="2003" name="Nature">
        <title>Global analysis of protein expression in yeast.</title>
        <authorList>
            <person name="Ghaemmaghami S."/>
            <person name="Huh W.-K."/>
            <person name="Bower K."/>
            <person name="Howson R.W."/>
            <person name="Belle A."/>
            <person name="Dephoure N."/>
            <person name="O'Shea E.K."/>
            <person name="Weissman J.S."/>
        </authorList>
    </citation>
    <scope>LEVEL OF PROTEIN EXPRESSION [LARGE SCALE ANALYSIS]</scope>
</reference>
<reference key="8">
    <citation type="journal article" date="2008" name="Mol. Cell. Proteomics">
        <title>A multidimensional chromatography technology for in-depth phosphoproteome analysis.</title>
        <authorList>
            <person name="Albuquerque C.P."/>
            <person name="Smolka M.B."/>
            <person name="Payne S.H."/>
            <person name="Bafna V."/>
            <person name="Eng J."/>
            <person name="Zhou H."/>
        </authorList>
    </citation>
    <scope>IDENTIFICATION BY MASS SPECTROMETRY [LARGE SCALE ANALYSIS]</scope>
</reference>
<accession>P40185</accession>
<accession>D6VVN0</accession>
<dbReference type="EMBL" id="AB050474">
    <property type="protein sequence ID" value="BAB20814.1"/>
    <property type="molecule type" value="Genomic_DNA"/>
</dbReference>
<dbReference type="EMBL" id="Z38060">
    <property type="protein sequence ID" value="CAA86171.1"/>
    <property type="molecule type" value="Genomic_DNA"/>
</dbReference>
<dbReference type="EMBL" id="AY558301">
    <property type="protein sequence ID" value="AAS56627.1"/>
    <property type="molecule type" value="Genomic_DNA"/>
</dbReference>
<dbReference type="EMBL" id="BK006942">
    <property type="protein sequence ID" value="DAA08496.1"/>
    <property type="molecule type" value="Genomic_DNA"/>
</dbReference>
<dbReference type="PIR" id="S48428">
    <property type="entry name" value="S48428"/>
</dbReference>
<dbReference type="RefSeq" id="NP_012213.3">
    <property type="nucleotide sequence ID" value="NM_001179401.3"/>
</dbReference>
<dbReference type="PDB" id="3QUW">
    <property type="method" value="X-ray"/>
    <property type="resolution" value="1.75 A"/>
    <property type="chains" value="A=1-145"/>
</dbReference>
<dbReference type="PDBsum" id="3QUW"/>
<dbReference type="SMR" id="P40185"/>
<dbReference type="BioGRID" id="34939">
    <property type="interactions" value="128"/>
</dbReference>
<dbReference type="DIP" id="DIP-4714N"/>
<dbReference type="FunCoup" id="P40185">
    <property type="interactions" value="681"/>
</dbReference>
<dbReference type="IntAct" id="P40185">
    <property type="interactions" value="24"/>
</dbReference>
<dbReference type="MINT" id="P40185"/>
<dbReference type="STRING" id="4932.YIL051C"/>
<dbReference type="iPTMnet" id="P40185"/>
<dbReference type="PaxDb" id="4932-YIL051C"/>
<dbReference type="PeptideAtlas" id="P40185"/>
<dbReference type="TopDownProteomics" id="P40185"/>
<dbReference type="EnsemblFungi" id="YIL051C_mRNA">
    <property type="protein sequence ID" value="YIL051C"/>
    <property type="gene ID" value="YIL051C"/>
</dbReference>
<dbReference type="GeneID" id="854760"/>
<dbReference type="KEGG" id="sce:YIL051C"/>
<dbReference type="AGR" id="SGD:S000001313"/>
<dbReference type="SGD" id="S000001313">
    <property type="gene designation" value="MMF1"/>
</dbReference>
<dbReference type="VEuPathDB" id="FungiDB:YIL051C"/>
<dbReference type="eggNOG" id="KOG2317">
    <property type="taxonomic scope" value="Eukaryota"/>
</dbReference>
<dbReference type="GeneTree" id="ENSGT00420000029792"/>
<dbReference type="HOGENOM" id="CLU_100715_7_2_1"/>
<dbReference type="InParanoid" id="P40185"/>
<dbReference type="OMA" id="IFLTEFK"/>
<dbReference type="OrthoDB" id="309640at2759"/>
<dbReference type="BioCyc" id="YEAST:G3O-31322-MONOMER"/>
<dbReference type="Reactome" id="R-SCE-8849175">
    <property type="pathway name" value="Threonine catabolism"/>
</dbReference>
<dbReference type="BioGRID-ORCS" id="854760">
    <property type="hits" value="8 hits in 10 CRISPR screens"/>
</dbReference>
<dbReference type="EvolutionaryTrace" id="P40185"/>
<dbReference type="PRO" id="PR:P40185"/>
<dbReference type="Proteomes" id="UP000002311">
    <property type="component" value="Chromosome IX"/>
</dbReference>
<dbReference type="RNAct" id="P40185">
    <property type="molecule type" value="protein"/>
</dbReference>
<dbReference type="GO" id="GO:0005829">
    <property type="term" value="C:cytosol"/>
    <property type="evidence" value="ECO:0000318"/>
    <property type="project" value="GO_Central"/>
</dbReference>
<dbReference type="GO" id="GO:0005759">
    <property type="term" value="C:mitochondrial matrix"/>
    <property type="evidence" value="ECO:0000314"/>
    <property type="project" value="SGD"/>
</dbReference>
<dbReference type="GO" id="GO:0005739">
    <property type="term" value="C:mitochondrion"/>
    <property type="evidence" value="ECO:0007005"/>
    <property type="project" value="SGD"/>
</dbReference>
<dbReference type="GO" id="GO:0019239">
    <property type="term" value="F:deaminase activity"/>
    <property type="evidence" value="ECO:0000318"/>
    <property type="project" value="GO_Central"/>
</dbReference>
<dbReference type="GO" id="GO:0009097">
    <property type="term" value="P:isoleucine biosynthetic process"/>
    <property type="evidence" value="ECO:0000315"/>
    <property type="project" value="SGD"/>
</dbReference>
<dbReference type="GO" id="GO:0032543">
    <property type="term" value="P:mitochondrial translation"/>
    <property type="evidence" value="ECO:0000316"/>
    <property type="project" value="SGD"/>
</dbReference>
<dbReference type="CDD" id="cd00448">
    <property type="entry name" value="YjgF_YER057c_UK114_family"/>
    <property type="match status" value="1"/>
</dbReference>
<dbReference type="FunFam" id="3.30.1330.40:FF:000001">
    <property type="entry name" value="L-PSP family endoribonuclease"/>
    <property type="match status" value="1"/>
</dbReference>
<dbReference type="Gene3D" id="3.30.1330.40">
    <property type="entry name" value="RutC-like"/>
    <property type="match status" value="1"/>
</dbReference>
<dbReference type="InterPro" id="IPR006056">
    <property type="entry name" value="RidA"/>
</dbReference>
<dbReference type="InterPro" id="IPR019897">
    <property type="entry name" value="RidA_CS"/>
</dbReference>
<dbReference type="InterPro" id="IPR035959">
    <property type="entry name" value="RutC-like_sf"/>
</dbReference>
<dbReference type="InterPro" id="IPR006175">
    <property type="entry name" value="YjgF/YER057c/UK114"/>
</dbReference>
<dbReference type="NCBIfam" id="TIGR00004">
    <property type="entry name" value="Rid family detoxifying hydrolase"/>
    <property type="match status" value="1"/>
</dbReference>
<dbReference type="PANTHER" id="PTHR11803">
    <property type="entry name" value="2-IMINOBUTANOATE/2-IMINOPROPANOATE DEAMINASE RIDA"/>
    <property type="match status" value="1"/>
</dbReference>
<dbReference type="PANTHER" id="PTHR11803:SF58">
    <property type="entry name" value="PROTEIN HMF1-RELATED"/>
    <property type="match status" value="1"/>
</dbReference>
<dbReference type="Pfam" id="PF01042">
    <property type="entry name" value="Ribonuc_L-PSP"/>
    <property type="match status" value="1"/>
</dbReference>
<dbReference type="SUPFAM" id="SSF55298">
    <property type="entry name" value="YjgF-like"/>
    <property type="match status" value="1"/>
</dbReference>
<dbReference type="PROSITE" id="PS01094">
    <property type="entry name" value="UPF0076"/>
    <property type="match status" value="1"/>
</dbReference>
<sequence length="145" mass="15908">MFLRNSVLRTAPVLRRGITTLTPVSTKLAPPAAASYSQAMKANNFVYVSGQIPYTPDNKPVQGSISEKAEQVFQNVKNILAESNSSLDNIVKVNVFLADMKNFAEFNSVYAKHFHTHKPARSCVGVASLPLNVDLEMEVIAVEKN</sequence>
<protein>
    <recommendedName>
        <fullName>Protein MMF1, mitochondrial</fullName>
    </recommendedName>
    <alternativeName>
        <fullName>Isoleucine biosynthesis and maintenance of intact mitochondria 1</fullName>
    </alternativeName>
    <alternativeName>
        <fullName>Maintenance of mitochondrial function 1</fullName>
    </alternativeName>
</protein>
<organism>
    <name type="scientific">Saccharomyces cerevisiae (strain ATCC 204508 / S288c)</name>
    <name type="common">Baker's yeast</name>
    <dbReference type="NCBI Taxonomy" id="559292"/>
    <lineage>
        <taxon>Eukaryota</taxon>
        <taxon>Fungi</taxon>
        <taxon>Dikarya</taxon>
        <taxon>Ascomycota</taxon>
        <taxon>Saccharomycotina</taxon>
        <taxon>Saccharomycetes</taxon>
        <taxon>Saccharomycetales</taxon>
        <taxon>Saccharomycetaceae</taxon>
        <taxon>Saccharomyces</taxon>
    </lineage>
</organism>